<proteinExistence type="inferred from homology"/>
<protein>
    <recommendedName>
        <fullName evidence="1">Ribosome-binding factor A</fullName>
    </recommendedName>
</protein>
<comment type="function">
    <text evidence="1">One of several proteins that assist in the late maturation steps of the functional core of the 30S ribosomal subunit. Associates with free 30S ribosomal subunits (but not with 30S subunits that are part of 70S ribosomes or polysomes). Required for efficient processing of 16S rRNA. May interact with the 5'-terminal helix region of 16S rRNA.</text>
</comment>
<comment type="subunit">
    <text evidence="1">Monomer. Binds 30S ribosomal subunits, but not 50S ribosomal subunits or 70S ribosomes.</text>
</comment>
<comment type="subcellular location">
    <subcellularLocation>
        <location evidence="1">Cytoplasm</location>
    </subcellularLocation>
</comment>
<comment type="similarity">
    <text evidence="1">Belongs to the RbfA family.</text>
</comment>
<sequence length="128" mass="14549">MANDRRVSRVSSLIKREVSQMLLMEIKDDRVGAGMVSVTDVDLSHDLQHAKIFVSIYGNEDAKAETMAGLKASAGFVRRELGQRIRLRRTPEVVFLEDSSLERGDRMLHLLDHIKTDRPPEDDDSEEE</sequence>
<reference key="1">
    <citation type="journal article" date="2007" name="DNA Res.">
        <title>Complete genomic structure of the bloom-forming toxic cyanobacterium Microcystis aeruginosa NIES-843.</title>
        <authorList>
            <person name="Kaneko T."/>
            <person name="Nakajima N."/>
            <person name="Okamoto S."/>
            <person name="Suzuki I."/>
            <person name="Tanabe Y."/>
            <person name="Tamaoki M."/>
            <person name="Nakamura Y."/>
            <person name="Kasai F."/>
            <person name="Watanabe A."/>
            <person name="Kawashima K."/>
            <person name="Kishida Y."/>
            <person name="Ono A."/>
            <person name="Shimizu Y."/>
            <person name="Takahashi C."/>
            <person name="Minami C."/>
            <person name="Fujishiro T."/>
            <person name="Kohara M."/>
            <person name="Katoh M."/>
            <person name="Nakazaki N."/>
            <person name="Nakayama S."/>
            <person name="Yamada M."/>
            <person name="Tabata S."/>
            <person name="Watanabe M.M."/>
        </authorList>
    </citation>
    <scope>NUCLEOTIDE SEQUENCE [LARGE SCALE GENOMIC DNA]</scope>
    <source>
        <strain>NIES-843 / IAM M-247</strain>
    </source>
</reference>
<organism>
    <name type="scientific">Microcystis aeruginosa (strain NIES-843 / IAM M-2473)</name>
    <dbReference type="NCBI Taxonomy" id="449447"/>
    <lineage>
        <taxon>Bacteria</taxon>
        <taxon>Bacillati</taxon>
        <taxon>Cyanobacteriota</taxon>
        <taxon>Cyanophyceae</taxon>
        <taxon>Oscillatoriophycideae</taxon>
        <taxon>Chroococcales</taxon>
        <taxon>Microcystaceae</taxon>
        <taxon>Microcystis</taxon>
    </lineage>
</organism>
<accession>B0JRP8</accession>
<gene>
    <name evidence="1" type="primary">rbfA</name>
    <name type="ordered locus">MAE_09760</name>
</gene>
<feature type="chain" id="PRO_1000073768" description="Ribosome-binding factor A">
    <location>
        <begin position="1"/>
        <end position="128"/>
    </location>
</feature>
<name>RBFA_MICAN</name>
<evidence type="ECO:0000255" key="1">
    <source>
        <dbReference type="HAMAP-Rule" id="MF_00003"/>
    </source>
</evidence>
<dbReference type="EMBL" id="AP009552">
    <property type="protein sequence ID" value="BAG00798.1"/>
    <property type="molecule type" value="Genomic_DNA"/>
</dbReference>
<dbReference type="RefSeq" id="WP_012264477.1">
    <property type="nucleotide sequence ID" value="NC_010296.1"/>
</dbReference>
<dbReference type="SMR" id="B0JRP8"/>
<dbReference type="STRING" id="449447.MAE_09760"/>
<dbReference type="PaxDb" id="449447-MAE_09760"/>
<dbReference type="EnsemblBacteria" id="BAG00798">
    <property type="protein sequence ID" value="BAG00798"/>
    <property type="gene ID" value="MAE_09760"/>
</dbReference>
<dbReference type="KEGG" id="mar:MAE_09760"/>
<dbReference type="PATRIC" id="fig|449447.4.peg.897"/>
<dbReference type="eggNOG" id="COG0858">
    <property type="taxonomic scope" value="Bacteria"/>
</dbReference>
<dbReference type="HOGENOM" id="CLU_089475_2_1_3"/>
<dbReference type="BioCyc" id="MAER449447:MAE_RS04300-MONOMER"/>
<dbReference type="Proteomes" id="UP000001510">
    <property type="component" value="Chromosome"/>
</dbReference>
<dbReference type="GO" id="GO:0005829">
    <property type="term" value="C:cytosol"/>
    <property type="evidence" value="ECO:0007669"/>
    <property type="project" value="TreeGrafter"/>
</dbReference>
<dbReference type="GO" id="GO:0043024">
    <property type="term" value="F:ribosomal small subunit binding"/>
    <property type="evidence" value="ECO:0007669"/>
    <property type="project" value="TreeGrafter"/>
</dbReference>
<dbReference type="GO" id="GO:0030490">
    <property type="term" value="P:maturation of SSU-rRNA"/>
    <property type="evidence" value="ECO:0007669"/>
    <property type="project" value="UniProtKB-UniRule"/>
</dbReference>
<dbReference type="Gene3D" id="3.30.300.20">
    <property type="match status" value="1"/>
</dbReference>
<dbReference type="HAMAP" id="MF_00003">
    <property type="entry name" value="RbfA"/>
    <property type="match status" value="1"/>
</dbReference>
<dbReference type="InterPro" id="IPR015946">
    <property type="entry name" value="KH_dom-like_a/b"/>
</dbReference>
<dbReference type="InterPro" id="IPR000238">
    <property type="entry name" value="RbfA"/>
</dbReference>
<dbReference type="InterPro" id="IPR023799">
    <property type="entry name" value="RbfA_dom_sf"/>
</dbReference>
<dbReference type="InterPro" id="IPR020053">
    <property type="entry name" value="Ribosome-bd_factorA_CS"/>
</dbReference>
<dbReference type="NCBIfam" id="TIGR00082">
    <property type="entry name" value="rbfA"/>
    <property type="match status" value="1"/>
</dbReference>
<dbReference type="PANTHER" id="PTHR33515">
    <property type="entry name" value="RIBOSOME-BINDING FACTOR A, CHLOROPLASTIC-RELATED"/>
    <property type="match status" value="1"/>
</dbReference>
<dbReference type="PANTHER" id="PTHR33515:SF1">
    <property type="entry name" value="RIBOSOME-BINDING FACTOR A, CHLOROPLASTIC-RELATED"/>
    <property type="match status" value="1"/>
</dbReference>
<dbReference type="Pfam" id="PF02033">
    <property type="entry name" value="RBFA"/>
    <property type="match status" value="1"/>
</dbReference>
<dbReference type="SUPFAM" id="SSF89919">
    <property type="entry name" value="Ribosome-binding factor A, RbfA"/>
    <property type="match status" value="1"/>
</dbReference>
<dbReference type="PROSITE" id="PS01319">
    <property type="entry name" value="RBFA"/>
    <property type="match status" value="1"/>
</dbReference>
<keyword id="KW-0963">Cytoplasm</keyword>
<keyword id="KW-0690">Ribosome biogenesis</keyword>